<comment type="function">
    <text evidence="1">Involved in the import of nuclear-targeted proteins into the nucleus and the export of poly(A) RNA out of the nucleus. Has a role in the endoplasmic reticulum-associated degradation (ERAD) pathway (By similarity).</text>
</comment>
<comment type="subcellular location">
    <subcellularLocation>
        <location evidence="1">Cytoplasm</location>
        <location evidence="1">Perinuclear region</location>
    </subcellularLocation>
    <subcellularLocation>
        <location evidence="1">Endoplasmic reticulum membrane</location>
        <topology evidence="1">Peripheral membrane protein</topology>
        <orientation evidence="1">Cytoplasmic side</orientation>
    </subcellularLocation>
    <subcellularLocation>
        <location evidence="1">Nucleus membrane</location>
        <topology evidence="1">Peripheral membrane protein</topology>
        <orientation evidence="1">Cytoplasmic side</orientation>
    </subcellularLocation>
    <text evidence="1">Localizes mainly at the nuclear periphery and the endoplasmic reticulum membrane.</text>
</comment>
<comment type="alternative products">
    <event type="alternative splicing"/>
    <isoform>
        <id>A4RN19-1</id>
        <name>1</name>
        <sequence type="displayed"/>
    </isoform>
    <isoform>
        <id>A4RN19-2</id>
        <name>2</name>
        <sequence type="described" ref="VSP_042194"/>
    </isoform>
</comment>
<comment type="similarity">
    <text evidence="4">Belongs to the NPL4 family.</text>
</comment>
<dbReference type="EMBL" id="CM001232">
    <property type="protein sequence ID" value="EHA53704.1"/>
    <property type="molecule type" value="Genomic_DNA"/>
</dbReference>
<dbReference type="EMBL" id="CM001232">
    <property type="protein sequence ID" value="EHA53705.1"/>
    <property type="molecule type" value="Genomic_DNA"/>
</dbReference>
<dbReference type="RefSeq" id="XP_003713511.1">
    <molecule id="A4RN19-2"/>
    <property type="nucleotide sequence ID" value="XM_003713463.1"/>
</dbReference>
<dbReference type="RefSeq" id="XP_003713512.1">
    <molecule id="A4RN19-1"/>
    <property type="nucleotide sequence ID" value="XM_003713464.1"/>
</dbReference>
<dbReference type="SMR" id="A4RN19"/>
<dbReference type="FunCoup" id="A4RN19">
    <property type="interactions" value="941"/>
</dbReference>
<dbReference type="STRING" id="242507.A4RN19"/>
<dbReference type="EnsemblFungi" id="MGG_04413T0">
    <molecule id="A4RN19-1"/>
    <property type="protein sequence ID" value="MGG_04413T0"/>
    <property type="gene ID" value="MGG_04413"/>
</dbReference>
<dbReference type="EnsemblFungi" id="MGG_04413T1">
    <molecule id="A4RN19-2"/>
    <property type="protein sequence ID" value="MGG_04413T1"/>
    <property type="gene ID" value="MGG_04413"/>
</dbReference>
<dbReference type="GeneID" id="2677741"/>
<dbReference type="KEGG" id="mgr:MGG_04413"/>
<dbReference type="VEuPathDB" id="FungiDB:MGG_04413"/>
<dbReference type="eggNOG" id="KOG2834">
    <property type="taxonomic scope" value="Eukaryota"/>
</dbReference>
<dbReference type="InParanoid" id="A4RN19"/>
<dbReference type="OrthoDB" id="10251089at2759"/>
<dbReference type="Proteomes" id="UP000009058">
    <property type="component" value="Chromosome 2"/>
</dbReference>
<dbReference type="GO" id="GO:0005829">
    <property type="term" value="C:cytosol"/>
    <property type="evidence" value="ECO:0000250"/>
    <property type="project" value="PAMGO_MGG"/>
</dbReference>
<dbReference type="GO" id="GO:0005783">
    <property type="term" value="C:endoplasmic reticulum"/>
    <property type="evidence" value="ECO:0000250"/>
    <property type="project" value="PAMGO_MGG"/>
</dbReference>
<dbReference type="GO" id="GO:0005789">
    <property type="term" value="C:endoplasmic reticulum membrane"/>
    <property type="evidence" value="ECO:0007669"/>
    <property type="project" value="UniProtKB-SubCell"/>
</dbReference>
<dbReference type="GO" id="GO:0031965">
    <property type="term" value="C:nuclear membrane"/>
    <property type="evidence" value="ECO:0007669"/>
    <property type="project" value="UniProtKB-SubCell"/>
</dbReference>
<dbReference type="GO" id="GO:0042175">
    <property type="term" value="C:nuclear outer membrane-endoplasmic reticulum membrane network"/>
    <property type="evidence" value="ECO:0000250"/>
    <property type="project" value="PAMGO_MGG"/>
</dbReference>
<dbReference type="GO" id="GO:0005634">
    <property type="term" value="C:nucleus"/>
    <property type="evidence" value="ECO:0000250"/>
    <property type="project" value="PAMGO_MGG"/>
</dbReference>
<dbReference type="GO" id="GO:0048471">
    <property type="term" value="C:perinuclear region of cytoplasm"/>
    <property type="evidence" value="ECO:0007669"/>
    <property type="project" value="UniProtKB-SubCell"/>
</dbReference>
<dbReference type="GO" id="GO:0043130">
    <property type="term" value="F:ubiquitin binding"/>
    <property type="evidence" value="ECO:0007669"/>
    <property type="project" value="TreeGrafter"/>
</dbReference>
<dbReference type="GO" id="GO:0031625">
    <property type="term" value="F:ubiquitin protein ligase binding"/>
    <property type="evidence" value="ECO:0007669"/>
    <property type="project" value="TreeGrafter"/>
</dbReference>
<dbReference type="GO" id="GO:0036503">
    <property type="term" value="P:ERAD pathway"/>
    <property type="evidence" value="ECO:0000250"/>
    <property type="project" value="PAMGO_MGG"/>
</dbReference>
<dbReference type="GO" id="GO:0051028">
    <property type="term" value="P:mRNA transport"/>
    <property type="evidence" value="ECO:0007669"/>
    <property type="project" value="UniProtKB-KW"/>
</dbReference>
<dbReference type="GO" id="GO:0015031">
    <property type="term" value="P:protein transport"/>
    <property type="evidence" value="ECO:0007669"/>
    <property type="project" value="UniProtKB-KW"/>
</dbReference>
<dbReference type="GO" id="GO:0006511">
    <property type="term" value="P:ubiquitin-dependent protein catabolic process"/>
    <property type="evidence" value="ECO:0000250"/>
    <property type="project" value="PAMGO_MGG"/>
</dbReference>
<dbReference type="CDD" id="cd08061">
    <property type="entry name" value="MPN_NPL4"/>
    <property type="match status" value="1"/>
</dbReference>
<dbReference type="Gene3D" id="3.40.140.10">
    <property type="entry name" value="Cytidine Deaminase, domain 2"/>
    <property type="match status" value="1"/>
</dbReference>
<dbReference type="Gene3D" id="3.10.20.90">
    <property type="entry name" value="Phosphatidylinositol 3-kinase Catalytic Subunit, Chain A, domain 1"/>
    <property type="match status" value="1"/>
</dbReference>
<dbReference type="InterPro" id="IPR037518">
    <property type="entry name" value="MPN"/>
</dbReference>
<dbReference type="InterPro" id="IPR016563">
    <property type="entry name" value="Npl4"/>
</dbReference>
<dbReference type="InterPro" id="IPR007717">
    <property type="entry name" value="NPL4_C"/>
</dbReference>
<dbReference type="InterPro" id="IPR007716">
    <property type="entry name" value="NPL4_Zn-bd_put"/>
</dbReference>
<dbReference type="InterPro" id="IPR029071">
    <property type="entry name" value="Ubiquitin-like_domsf"/>
</dbReference>
<dbReference type="PANTHER" id="PTHR12710">
    <property type="entry name" value="NUCLEAR PROTEIN LOCALIZATION 4"/>
    <property type="match status" value="1"/>
</dbReference>
<dbReference type="PANTHER" id="PTHR12710:SF0">
    <property type="entry name" value="NUCLEAR PROTEIN LOCALIZATION PROTEIN 4 HOMOLOG"/>
    <property type="match status" value="1"/>
</dbReference>
<dbReference type="Pfam" id="PF05021">
    <property type="entry name" value="NPL4"/>
    <property type="match status" value="1"/>
</dbReference>
<dbReference type="Pfam" id="PF05020">
    <property type="entry name" value="zf-NPL4"/>
    <property type="match status" value="1"/>
</dbReference>
<dbReference type="PIRSF" id="PIRSF010052">
    <property type="entry name" value="Polyub_prc_Npl4"/>
    <property type="match status" value="1"/>
</dbReference>
<dbReference type="SUPFAM" id="SSF54236">
    <property type="entry name" value="Ubiquitin-like"/>
    <property type="match status" value="1"/>
</dbReference>
<dbReference type="PROSITE" id="PS50249">
    <property type="entry name" value="MPN"/>
    <property type="match status" value="1"/>
</dbReference>
<proteinExistence type="inferred from homology"/>
<protein>
    <recommendedName>
        <fullName>Nuclear protein localization protein 4</fullName>
    </recommendedName>
</protein>
<gene>
    <name type="primary">NPL4</name>
    <name type="ORF">MGG_04413</name>
</gene>
<keyword id="KW-0025">Alternative splicing</keyword>
<keyword id="KW-0963">Cytoplasm</keyword>
<keyword id="KW-0256">Endoplasmic reticulum</keyword>
<keyword id="KW-0472">Membrane</keyword>
<keyword id="KW-0509">mRNA transport</keyword>
<keyword id="KW-0539">Nucleus</keyword>
<keyword id="KW-0653">Protein transport</keyword>
<keyword id="KW-1185">Reference proteome</keyword>
<keyword id="KW-0811">Translocation</keyword>
<keyword id="KW-0813">Transport</keyword>
<accession>A4RN19</accession>
<accession>G4MZE9</accession>
<accession>G4MZF0</accession>
<sequence length="669" mass="74006">MLLRLRGPDGMLRIELDPKDTFNKLGQELMGKLPPTVDPATITVSNAPGSQGDKKLLKDIAKYKVEAIGLKHGDLIFVDYKHQGAEADGTANSDGASQPLTSTTNRLNGQPVLPTEDLPIDPLPTPAPGATIKNPWEVVRQSPLDDRLDKKDGKIPRKRDAMCRHGPKGMCDYCQPLDPFDAKFLAEKKIKYLSMHAHLRKINSATNKPELGSSFIPPLSEPYFRVKHDCPSGHPQWPEGICSKCQPSAITLQPQPFRMVDHVEFASPSIVDSFINTWRRTGGQRYGIMYGKYSEYEEVPLGIKAVVQAIYEPPQVDEVDGVSLNSWDNEKDVNQVARLCGLEPVGAIWTDLLDAGAGDGSVVCKRHADSYFLSSLEVCFAARLQAQHPKPSKWSDTGRFGSNFVTCIISGNEQGEIAISSYQVSNEAVEMVRADIMEPSADPTVMLVREEEEDDGSTSRTRYIPDVFYRRINEYGANVQENAKPSFPVEYLFVTLTHGFPDVAKPMFSDEGAFPIENREYMGESQEHSAAAKALKVHEKASSGSSKDGMKVSNFHLLCFLHQMSVLSKDEESLLCRVATQHDLADAFQLRSTTGWQTLMAILQSTGERIPKRSRQTDVLAADPAASSYPGRRGIDDSDERLAKRFASVRLNARGDGRNGRDRPSAHET</sequence>
<evidence type="ECO:0000250" key="1"/>
<evidence type="ECO:0000255" key="2">
    <source>
        <dbReference type="PROSITE-ProRule" id="PRU01182"/>
    </source>
</evidence>
<evidence type="ECO:0000256" key="3">
    <source>
        <dbReference type="SAM" id="MobiDB-lite"/>
    </source>
</evidence>
<evidence type="ECO:0000305" key="4"/>
<name>NPL4_PYRO7</name>
<organism>
    <name type="scientific">Pyricularia oryzae (strain 70-15 / ATCC MYA-4617 / FGSC 8958)</name>
    <name type="common">Rice blast fungus</name>
    <name type="synonym">Magnaporthe oryzae</name>
    <dbReference type="NCBI Taxonomy" id="242507"/>
    <lineage>
        <taxon>Eukaryota</taxon>
        <taxon>Fungi</taxon>
        <taxon>Dikarya</taxon>
        <taxon>Ascomycota</taxon>
        <taxon>Pezizomycotina</taxon>
        <taxon>Sordariomycetes</taxon>
        <taxon>Sordariomycetidae</taxon>
        <taxon>Magnaporthales</taxon>
        <taxon>Pyriculariaceae</taxon>
        <taxon>Pyricularia</taxon>
    </lineage>
</organism>
<feature type="chain" id="PRO_0000339448" description="Nuclear protein localization protein 4">
    <location>
        <begin position="1"/>
        <end position="669"/>
    </location>
</feature>
<feature type="domain" description="MPN" evidence="2">
    <location>
        <begin position="263"/>
        <end position="400"/>
    </location>
</feature>
<feature type="region of interest" description="Disordered" evidence="3">
    <location>
        <begin position="87"/>
        <end position="112"/>
    </location>
</feature>
<feature type="region of interest" description="Disordered" evidence="3">
    <location>
        <begin position="613"/>
        <end position="637"/>
    </location>
</feature>
<feature type="compositionally biased region" description="Polar residues" evidence="3">
    <location>
        <begin position="90"/>
        <end position="108"/>
    </location>
</feature>
<feature type="splice variant" id="VSP_042194" description="In isoform 2." evidence="4">
    <location>
        <begin position="608"/>
        <end position="669"/>
    </location>
</feature>
<reference key="1">
    <citation type="journal article" date="2005" name="Nature">
        <title>The genome sequence of the rice blast fungus Magnaporthe grisea.</title>
        <authorList>
            <person name="Dean R.A."/>
            <person name="Talbot N.J."/>
            <person name="Ebbole D.J."/>
            <person name="Farman M.L."/>
            <person name="Mitchell T.K."/>
            <person name="Orbach M.J."/>
            <person name="Thon M.R."/>
            <person name="Kulkarni R."/>
            <person name="Xu J.-R."/>
            <person name="Pan H."/>
            <person name="Read N.D."/>
            <person name="Lee Y.-H."/>
            <person name="Carbone I."/>
            <person name="Brown D."/>
            <person name="Oh Y.Y."/>
            <person name="Donofrio N."/>
            <person name="Jeong J.S."/>
            <person name="Soanes D.M."/>
            <person name="Djonovic S."/>
            <person name="Kolomiets E."/>
            <person name="Rehmeyer C."/>
            <person name="Li W."/>
            <person name="Harding M."/>
            <person name="Kim S."/>
            <person name="Lebrun M.-H."/>
            <person name="Bohnert H."/>
            <person name="Coughlan S."/>
            <person name="Butler J."/>
            <person name="Calvo S.E."/>
            <person name="Ma L.-J."/>
            <person name="Nicol R."/>
            <person name="Purcell S."/>
            <person name="Nusbaum C."/>
            <person name="Galagan J.E."/>
            <person name="Birren B.W."/>
        </authorList>
    </citation>
    <scope>NUCLEOTIDE SEQUENCE [LARGE SCALE GENOMIC DNA] (ISOFORMS 1 AND 2)</scope>
    <source>
        <strain>70-15 / ATCC MYA-4617 / FGSC 8958</strain>
    </source>
</reference>